<comment type="function">
    <text evidence="1">Is involved in NO detoxification in an aerobic process, termed nitric oxide dioxygenase (NOD) reaction that utilizes O(2) and NAD(P)H to convert NO to nitrate, which protects the bacterium from various noxious nitrogen compounds. Therefore, plays a central role in the inducible response to nitrosative stress.</text>
</comment>
<comment type="catalytic activity">
    <reaction evidence="1">
        <text>2 nitric oxide + NADPH + 2 O2 = 2 nitrate + NADP(+) + H(+)</text>
        <dbReference type="Rhea" id="RHEA:19465"/>
        <dbReference type="ChEBI" id="CHEBI:15378"/>
        <dbReference type="ChEBI" id="CHEBI:15379"/>
        <dbReference type="ChEBI" id="CHEBI:16480"/>
        <dbReference type="ChEBI" id="CHEBI:17632"/>
        <dbReference type="ChEBI" id="CHEBI:57783"/>
        <dbReference type="ChEBI" id="CHEBI:58349"/>
        <dbReference type="EC" id="1.14.12.17"/>
    </reaction>
</comment>
<comment type="catalytic activity">
    <reaction evidence="1">
        <text>2 nitric oxide + NADH + 2 O2 = 2 nitrate + NAD(+) + H(+)</text>
        <dbReference type="Rhea" id="RHEA:19469"/>
        <dbReference type="ChEBI" id="CHEBI:15378"/>
        <dbReference type="ChEBI" id="CHEBI:15379"/>
        <dbReference type="ChEBI" id="CHEBI:16480"/>
        <dbReference type="ChEBI" id="CHEBI:17632"/>
        <dbReference type="ChEBI" id="CHEBI:57540"/>
        <dbReference type="ChEBI" id="CHEBI:57945"/>
        <dbReference type="EC" id="1.14.12.17"/>
    </reaction>
</comment>
<comment type="cofactor">
    <cofactor evidence="1">
        <name>heme b</name>
        <dbReference type="ChEBI" id="CHEBI:60344"/>
    </cofactor>
    <text evidence="1">Binds 1 heme b (iron(II)-protoporphyrin IX) group per subunit.</text>
</comment>
<comment type="cofactor">
    <cofactor evidence="1">
        <name>FAD</name>
        <dbReference type="ChEBI" id="CHEBI:57692"/>
    </cofactor>
    <text evidence="1">Binds 1 FAD per subunit.</text>
</comment>
<comment type="domain">
    <text>Consists of two distinct domains; an N-terminal heme-containing oxygen-binding domain and a C-terminal reductase domain with binding sites for FAD and NAD(P)H.</text>
</comment>
<comment type="similarity">
    <text evidence="1">Belongs to the globin family. Two-domain flavohemoproteins subfamily.</text>
</comment>
<comment type="similarity">
    <text evidence="1">In the C-terminal section; belongs to the flavoprotein pyridine nucleotide cytochrome reductase family.</text>
</comment>
<gene>
    <name evidence="1" type="primary">hmp</name>
    <name type="synonym">fsrB</name>
    <name type="synonym">hmp2</name>
    <name type="synonym">hmpA</name>
    <name type="synonym">hmpX</name>
    <name type="ordered locus">YPO2908</name>
    <name type="ordered locus">y1321</name>
    <name type="ordered locus">YP_2547</name>
</gene>
<proteinExistence type="inferred from homology"/>
<protein>
    <recommendedName>
        <fullName evidence="1">Flavohemoprotein</fullName>
    </recommendedName>
    <alternativeName>
        <fullName evidence="1">Flavohemoglobin</fullName>
    </alternativeName>
    <alternativeName>
        <fullName evidence="1">Hemoglobin-like protein</fullName>
    </alternativeName>
    <alternativeName>
        <fullName evidence="1">Nitric oxide dioxygenase</fullName>
        <shortName evidence="1">NO oxygenase</shortName>
        <shortName evidence="1">NOD</shortName>
        <ecNumber evidence="1">1.14.12.17</ecNumber>
    </alternativeName>
</protein>
<sequence length="396" mass="44816">MLDTQTIAIVKSTIPLLAATGPKLTAHFYERMFKHHPELKNIFNMSNQSSGDQREALFNAICAYATNIENLAALLPTVERIAQKHTSLNIQPEHYPIVGEHLIATLDELFSPGQAVLDAWAKAYGVLADVFIQRESQIYQQSETETGGWRTLRRFRIIKKEQQSEVICSFVLAPEDGGQVLHYKPGQYLGIYIEHESLEFQEIRQYSLTTAPNGKTYRIAVKREEQGTVSNLLHRELNEGDIVRIAPPRGDFFLDVSPDTPVALISAGVGQTPMLSMLNTLYSQQHAAPVHWLHAAENGRVHAFADEVSAIAAKMPNLSRHVWYREPDLQDKHGEDYHSQGLMDLSSYQWLADDPKRHYYFCGPLPFMQFIGRQLLAQGIAPEQIHYECFGPHKVI</sequence>
<name>HMP_YERPE</name>
<accession>Q8ZCR0</accession>
<accession>Q0WCZ6</accession>
<accession>Q74SP6</accession>
<accession>Q7CJP3</accession>
<feature type="chain" id="PRO_0000052455" description="Flavohemoprotein">
    <location>
        <begin position="1"/>
        <end position="396"/>
    </location>
</feature>
<feature type="domain" description="Globin" evidence="2">
    <location>
        <begin position="1"/>
        <end position="136"/>
    </location>
</feature>
<feature type="domain" description="FAD-binding FR-type" evidence="1">
    <location>
        <begin position="150"/>
        <end position="255"/>
    </location>
</feature>
<feature type="region of interest" description="Reductase">
    <location>
        <begin position="147"/>
        <end position="396"/>
    </location>
</feature>
<feature type="active site" description="Charge relay system" evidence="1">
    <location>
        <position position="95"/>
    </location>
</feature>
<feature type="active site" description="Charge relay system" evidence="1">
    <location>
        <position position="135"/>
    </location>
</feature>
<feature type="binding site" description="proximal binding residue" evidence="1">
    <location>
        <position position="85"/>
    </location>
    <ligand>
        <name>heme b</name>
        <dbReference type="ChEBI" id="CHEBI:60344"/>
    </ligand>
    <ligandPart>
        <name>Fe</name>
        <dbReference type="ChEBI" id="CHEBI:18248"/>
    </ligandPart>
</feature>
<feature type="binding site" evidence="1">
    <location>
        <position position="188"/>
    </location>
    <ligand>
        <name>FAD</name>
        <dbReference type="ChEBI" id="CHEBI:57692"/>
    </ligand>
</feature>
<feature type="binding site" evidence="1">
    <location>
        <begin position="204"/>
        <end position="207"/>
    </location>
    <ligand>
        <name>FAD</name>
        <dbReference type="ChEBI" id="CHEBI:57692"/>
    </ligand>
</feature>
<feature type="binding site" evidence="1">
    <location>
        <begin position="268"/>
        <end position="273"/>
    </location>
    <ligand>
        <name>NADP(+)</name>
        <dbReference type="ChEBI" id="CHEBI:58349"/>
    </ligand>
</feature>
<feature type="binding site" evidence="1">
    <location>
        <begin position="389"/>
        <end position="392"/>
    </location>
    <ligand>
        <name>FAD</name>
        <dbReference type="ChEBI" id="CHEBI:57692"/>
    </ligand>
</feature>
<feature type="site" description="Involved in heme-bound ligand stabilization and O-O bond activation" evidence="1">
    <location>
        <position position="29"/>
    </location>
</feature>
<feature type="site" description="Influences the redox potential of the prosthetic heme and FAD groups" evidence="1">
    <location>
        <position position="84"/>
    </location>
</feature>
<feature type="site" description="Influences the redox potential of the prosthetic heme and FAD groups" evidence="1">
    <location>
        <position position="388"/>
    </location>
</feature>
<evidence type="ECO:0000255" key="1">
    <source>
        <dbReference type="HAMAP-Rule" id="MF_01252"/>
    </source>
</evidence>
<evidence type="ECO:0000255" key="2">
    <source>
        <dbReference type="PROSITE-ProRule" id="PRU00238"/>
    </source>
</evidence>
<dbReference type="EC" id="1.14.12.17" evidence="1"/>
<dbReference type="EMBL" id="AL590842">
    <property type="protein sequence ID" value="CAL21519.1"/>
    <property type="molecule type" value="Genomic_DNA"/>
</dbReference>
<dbReference type="EMBL" id="AE009952">
    <property type="protein sequence ID" value="AAM84894.1"/>
    <property type="molecule type" value="Genomic_DNA"/>
</dbReference>
<dbReference type="EMBL" id="AE017042">
    <property type="protein sequence ID" value="AAS62743.1"/>
    <property type="molecule type" value="Genomic_DNA"/>
</dbReference>
<dbReference type="PIR" id="AD0354">
    <property type="entry name" value="AD0354"/>
</dbReference>
<dbReference type="RefSeq" id="WP_002211553.1">
    <property type="nucleotide sequence ID" value="NZ_WUCM01000090.1"/>
</dbReference>
<dbReference type="RefSeq" id="YP_002347842.1">
    <property type="nucleotide sequence ID" value="NC_003143.1"/>
</dbReference>
<dbReference type="SMR" id="Q8ZCR0"/>
<dbReference type="IntAct" id="Q8ZCR0">
    <property type="interactions" value="1"/>
</dbReference>
<dbReference type="STRING" id="214092.YPO2908"/>
<dbReference type="PaxDb" id="214092-YPO2908"/>
<dbReference type="DNASU" id="1146268"/>
<dbReference type="EnsemblBacteria" id="AAS62743">
    <property type="protein sequence ID" value="AAS62743"/>
    <property type="gene ID" value="YP_2547"/>
</dbReference>
<dbReference type="GeneID" id="57975865"/>
<dbReference type="KEGG" id="ype:YPO2908"/>
<dbReference type="KEGG" id="ypk:y1321"/>
<dbReference type="KEGG" id="ypm:YP_2547"/>
<dbReference type="PATRIC" id="fig|214092.21.peg.3358"/>
<dbReference type="eggNOG" id="COG1017">
    <property type="taxonomic scope" value="Bacteria"/>
</dbReference>
<dbReference type="eggNOG" id="COG1018">
    <property type="taxonomic scope" value="Bacteria"/>
</dbReference>
<dbReference type="HOGENOM" id="CLU_003827_12_0_6"/>
<dbReference type="OMA" id="ADIHYEV"/>
<dbReference type="OrthoDB" id="9801223at2"/>
<dbReference type="Proteomes" id="UP000000815">
    <property type="component" value="Chromosome"/>
</dbReference>
<dbReference type="Proteomes" id="UP000001019">
    <property type="component" value="Chromosome"/>
</dbReference>
<dbReference type="Proteomes" id="UP000002490">
    <property type="component" value="Chromosome"/>
</dbReference>
<dbReference type="GO" id="GO:0005737">
    <property type="term" value="C:cytoplasm"/>
    <property type="evidence" value="ECO:0000318"/>
    <property type="project" value="GO_Central"/>
</dbReference>
<dbReference type="GO" id="GO:0071949">
    <property type="term" value="F:FAD binding"/>
    <property type="evidence" value="ECO:0000318"/>
    <property type="project" value="GO_Central"/>
</dbReference>
<dbReference type="GO" id="GO:0020037">
    <property type="term" value="F:heme binding"/>
    <property type="evidence" value="ECO:0007669"/>
    <property type="project" value="InterPro"/>
</dbReference>
<dbReference type="GO" id="GO:0046872">
    <property type="term" value="F:metal ion binding"/>
    <property type="evidence" value="ECO:0007669"/>
    <property type="project" value="UniProtKB-KW"/>
</dbReference>
<dbReference type="GO" id="GO:0008941">
    <property type="term" value="F:nitric oxide dioxygenase NAD(P)H activity"/>
    <property type="evidence" value="ECO:0000318"/>
    <property type="project" value="GO_Central"/>
</dbReference>
<dbReference type="GO" id="GO:0019825">
    <property type="term" value="F:oxygen binding"/>
    <property type="evidence" value="ECO:0007669"/>
    <property type="project" value="InterPro"/>
</dbReference>
<dbReference type="GO" id="GO:0005344">
    <property type="term" value="F:oxygen carrier activity"/>
    <property type="evidence" value="ECO:0007669"/>
    <property type="project" value="UniProtKB-UniRule"/>
</dbReference>
<dbReference type="GO" id="GO:0071500">
    <property type="term" value="P:cellular response to nitrosative stress"/>
    <property type="evidence" value="ECO:0000318"/>
    <property type="project" value="GO_Central"/>
</dbReference>
<dbReference type="GO" id="GO:0046210">
    <property type="term" value="P:nitric oxide catabolic process"/>
    <property type="evidence" value="ECO:0000318"/>
    <property type="project" value="GO_Central"/>
</dbReference>
<dbReference type="GO" id="GO:0009636">
    <property type="term" value="P:response to toxic substance"/>
    <property type="evidence" value="ECO:0007669"/>
    <property type="project" value="UniProtKB-KW"/>
</dbReference>
<dbReference type="CDD" id="cd06184">
    <property type="entry name" value="flavohem_like_fad_nad_binding"/>
    <property type="match status" value="1"/>
</dbReference>
<dbReference type="CDD" id="cd14776">
    <property type="entry name" value="HmpEc-globin-like"/>
    <property type="match status" value="1"/>
</dbReference>
<dbReference type="FunFam" id="1.10.490.10:FF:000003">
    <property type="entry name" value="Flavohemoprotein"/>
    <property type="match status" value="1"/>
</dbReference>
<dbReference type="FunFam" id="2.40.30.10:FF:000034">
    <property type="entry name" value="Flavohemoprotein"/>
    <property type="match status" value="1"/>
</dbReference>
<dbReference type="FunFam" id="3.40.50.80:FF:000010">
    <property type="entry name" value="Flavohemoprotein"/>
    <property type="match status" value="1"/>
</dbReference>
<dbReference type="Gene3D" id="1.10.490.10">
    <property type="entry name" value="Globins"/>
    <property type="match status" value="1"/>
</dbReference>
<dbReference type="Gene3D" id="3.40.50.80">
    <property type="entry name" value="Nucleotide-binding domain of ferredoxin-NADP reductase (FNR) module"/>
    <property type="match status" value="1"/>
</dbReference>
<dbReference type="Gene3D" id="2.40.30.10">
    <property type="entry name" value="Translation factors"/>
    <property type="match status" value="1"/>
</dbReference>
<dbReference type="HAMAP" id="MF_01252">
    <property type="entry name" value="Hmp"/>
    <property type="match status" value="1"/>
</dbReference>
<dbReference type="InterPro" id="IPR008333">
    <property type="entry name" value="Cbr1-like_FAD-bd_dom"/>
</dbReference>
<dbReference type="InterPro" id="IPR017927">
    <property type="entry name" value="FAD-bd_FR_type"/>
</dbReference>
<dbReference type="InterPro" id="IPR001709">
    <property type="entry name" value="Flavoprot_Pyr_Nucl_cyt_Rdtase"/>
</dbReference>
<dbReference type="InterPro" id="IPR039261">
    <property type="entry name" value="FNR_nucleotide-bd"/>
</dbReference>
<dbReference type="InterPro" id="IPR000971">
    <property type="entry name" value="Globin"/>
</dbReference>
<dbReference type="InterPro" id="IPR009050">
    <property type="entry name" value="Globin-like_sf"/>
</dbReference>
<dbReference type="InterPro" id="IPR012292">
    <property type="entry name" value="Globin/Proto"/>
</dbReference>
<dbReference type="InterPro" id="IPR023950">
    <property type="entry name" value="Hmp"/>
</dbReference>
<dbReference type="InterPro" id="IPR001433">
    <property type="entry name" value="OxRdtase_FAD/NAD-bd"/>
</dbReference>
<dbReference type="InterPro" id="IPR017938">
    <property type="entry name" value="Riboflavin_synthase-like_b-brl"/>
</dbReference>
<dbReference type="NCBIfam" id="NF009805">
    <property type="entry name" value="PRK13289.1"/>
    <property type="match status" value="1"/>
</dbReference>
<dbReference type="PANTHER" id="PTHR43396">
    <property type="entry name" value="FLAVOHEMOPROTEIN"/>
    <property type="match status" value="1"/>
</dbReference>
<dbReference type="PANTHER" id="PTHR43396:SF3">
    <property type="entry name" value="FLAVOHEMOPROTEIN"/>
    <property type="match status" value="1"/>
</dbReference>
<dbReference type="Pfam" id="PF00970">
    <property type="entry name" value="FAD_binding_6"/>
    <property type="match status" value="1"/>
</dbReference>
<dbReference type="Pfam" id="PF00042">
    <property type="entry name" value="Globin"/>
    <property type="match status" value="1"/>
</dbReference>
<dbReference type="Pfam" id="PF00175">
    <property type="entry name" value="NAD_binding_1"/>
    <property type="match status" value="1"/>
</dbReference>
<dbReference type="PRINTS" id="PR00371">
    <property type="entry name" value="FPNCR"/>
</dbReference>
<dbReference type="PRINTS" id="PR00410">
    <property type="entry name" value="PHEHYDRXLASE"/>
</dbReference>
<dbReference type="SUPFAM" id="SSF52343">
    <property type="entry name" value="Ferredoxin reductase-like, C-terminal NADP-linked domain"/>
    <property type="match status" value="1"/>
</dbReference>
<dbReference type="SUPFAM" id="SSF46458">
    <property type="entry name" value="Globin-like"/>
    <property type="match status" value="1"/>
</dbReference>
<dbReference type="SUPFAM" id="SSF63380">
    <property type="entry name" value="Riboflavin synthase domain-like"/>
    <property type="match status" value="1"/>
</dbReference>
<dbReference type="PROSITE" id="PS51384">
    <property type="entry name" value="FAD_FR"/>
    <property type="match status" value="1"/>
</dbReference>
<dbReference type="PROSITE" id="PS01033">
    <property type="entry name" value="GLOBIN"/>
    <property type="match status" value="1"/>
</dbReference>
<reference key="1">
    <citation type="journal article" date="2001" name="Nature">
        <title>Genome sequence of Yersinia pestis, the causative agent of plague.</title>
        <authorList>
            <person name="Parkhill J."/>
            <person name="Wren B.W."/>
            <person name="Thomson N.R."/>
            <person name="Titball R.W."/>
            <person name="Holden M.T.G."/>
            <person name="Prentice M.B."/>
            <person name="Sebaihia M."/>
            <person name="James K.D."/>
            <person name="Churcher C.M."/>
            <person name="Mungall K.L."/>
            <person name="Baker S."/>
            <person name="Basham D."/>
            <person name="Bentley S.D."/>
            <person name="Brooks K."/>
            <person name="Cerdeno-Tarraga A.-M."/>
            <person name="Chillingworth T."/>
            <person name="Cronin A."/>
            <person name="Davies R.M."/>
            <person name="Davis P."/>
            <person name="Dougan G."/>
            <person name="Feltwell T."/>
            <person name="Hamlin N."/>
            <person name="Holroyd S."/>
            <person name="Jagels K."/>
            <person name="Karlyshev A.V."/>
            <person name="Leather S."/>
            <person name="Moule S."/>
            <person name="Oyston P.C.F."/>
            <person name="Quail M.A."/>
            <person name="Rutherford K.M."/>
            <person name="Simmonds M."/>
            <person name="Skelton J."/>
            <person name="Stevens K."/>
            <person name="Whitehead S."/>
            <person name="Barrell B.G."/>
        </authorList>
    </citation>
    <scope>NUCLEOTIDE SEQUENCE [LARGE SCALE GENOMIC DNA]</scope>
    <source>
        <strain>CO-92 / Biovar Orientalis</strain>
    </source>
</reference>
<reference key="2">
    <citation type="journal article" date="2002" name="J. Bacteriol.">
        <title>Genome sequence of Yersinia pestis KIM.</title>
        <authorList>
            <person name="Deng W."/>
            <person name="Burland V."/>
            <person name="Plunkett G. III"/>
            <person name="Boutin A."/>
            <person name="Mayhew G.F."/>
            <person name="Liss P."/>
            <person name="Perna N.T."/>
            <person name="Rose D.J."/>
            <person name="Mau B."/>
            <person name="Zhou S."/>
            <person name="Schwartz D.C."/>
            <person name="Fetherston J.D."/>
            <person name="Lindler L.E."/>
            <person name="Brubaker R.R."/>
            <person name="Plano G.V."/>
            <person name="Straley S.C."/>
            <person name="McDonough K.A."/>
            <person name="Nilles M.L."/>
            <person name="Matson J.S."/>
            <person name="Blattner F.R."/>
            <person name="Perry R.D."/>
        </authorList>
    </citation>
    <scope>NUCLEOTIDE SEQUENCE [LARGE SCALE GENOMIC DNA]</scope>
    <source>
        <strain>KIM10+ / Biovar Mediaevalis</strain>
    </source>
</reference>
<reference key="3">
    <citation type="journal article" date="2004" name="DNA Res.">
        <title>Complete genome sequence of Yersinia pestis strain 91001, an isolate avirulent to humans.</title>
        <authorList>
            <person name="Song Y."/>
            <person name="Tong Z."/>
            <person name="Wang J."/>
            <person name="Wang L."/>
            <person name="Guo Z."/>
            <person name="Han Y."/>
            <person name="Zhang J."/>
            <person name="Pei D."/>
            <person name="Zhou D."/>
            <person name="Qin H."/>
            <person name="Pang X."/>
            <person name="Han Y."/>
            <person name="Zhai J."/>
            <person name="Li M."/>
            <person name="Cui B."/>
            <person name="Qi Z."/>
            <person name="Jin L."/>
            <person name="Dai R."/>
            <person name="Chen F."/>
            <person name="Li S."/>
            <person name="Ye C."/>
            <person name="Du Z."/>
            <person name="Lin W."/>
            <person name="Wang J."/>
            <person name="Yu J."/>
            <person name="Yang H."/>
            <person name="Wang J."/>
            <person name="Huang P."/>
            <person name="Yang R."/>
        </authorList>
    </citation>
    <scope>NUCLEOTIDE SEQUENCE [LARGE SCALE GENOMIC DNA]</scope>
    <source>
        <strain>91001 / Biovar Mediaevalis</strain>
    </source>
</reference>
<organism>
    <name type="scientific">Yersinia pestis</name>
    <dbReference type="NCBI Taxonomy" id="632"/>
    <lineage>
        <taxon>Bacteria</taxon>
        <taxon>Pseudomonadati</taxon>
        <taxon>Pseudomonadota</taxon>
        <taxon>Gammaproteobacteria</taxon>
        <taxon>Enterobacterales</taxon>
        <taxon>Yersiniaceae</taxon>
        <taxon>Yersinia</taxon>
    </lineage>
</organism>
<keyword id="KW-0216">Detoxification</keyword>
<keyword id="KW-0274">FAD</keyword>
<keyword id="KW-0285">Flavoprotein</keyword>
<keyword id="KW-0349">Heme</keyword>
<keyword id="KW-0408">Iron</keyword>
<keyword id="KW-0479">Metal-binding</keyword>
<keyword id="KW-0520">NAD</keyword>
<keyword id="KW-0521">NADP</keyword>
<keyword id="KW-0560">Oxidoreductase</keyword>
<keyword id="KW-0561">Oxygen transport</keyword>
<keyword id="KW-1185">Reference proteome</keyword>
<keyword id="KW-0813">Transport</keyword>